<reference key="1">
    <citation type="journal article" date="2009" name="Science">
        <title>The genome sequence of taurine cattle: a window to ruminant biology and evolution.</title>
        <authorList>
            <consortium name="The bovine genome sequencing and analysis consortium"/>
        </authorList>
    </citation>
    <scope>NUCLEOTIDE SEQUENCE [LARGE SCALE GENOMIC DNA]</scope>
    <source>
        <strain>Hereford</strain>
    </source>
</reference>
<reference key="2">
    <citation type="submission" date="1996-08" db="EMBL/GenBank/DDBJ databases">
        <title>PCR amplification of amylin 3-34 from genomic DNA.</title>
        <authorList>
            <person name="Albrandt K."/>
            <person name="Sierzega M.E."/>
            <person name="Mull E."/>
            <person name="Brady E.M.G."/>
        </authorList>
    </citation>
    <scope>NUCLEOTIDE SEQUENCE [GENOMIC DNA] OF 38-69</scope>
</reference>
<accession>Q28207</accession>
<gene>
    <name type="primary">IAPP</name>
</gene>
<sequence>MGILKLPVVLIVLCVALNHLEGGGKPTESHQMEKRKCGTATCETQRLANFLAPSSNKLGAIFSPTKMGSNTYGKRKKVEILKREPLSYLPI</sequence>
<organism>
    <name type="scientific">Bos taurus</name>
    <name type="common">Bovine</name>
    <dbReference type="NCBI Taxonomy" id="9913"/>
    <lineage>
        <taxon>Eukaryota</taxon>
        <taxon>Metazoa</taxon>
        <taxon>Chordata</taxon>
        <taxon>Craniata</taxon>
        <taxon>Vertebrata</taxon>
        <taxon>Euteleostomi</taxon>
        <taxon>Mammalia</taxon>
        <taxon>Eutheria</taxon>
        <taxon>Laurasiatheria</taxon>
        <taxon>Artiodactyla</taxon>
        <taxon>Ruminantia</taxon>
        <taxon>Pecora</taxon>
        <taxon>Bovidae</taxon>
        <taxon>Bovinae</taxon>
        <taxon>Bos</taxon>
    </lineage>
</organism>
<keyword id="KW-0027">Amidation</keyword>
<keyword id="KW-0034">Amyloid</keyword>
<keyword id="KW-0165">Cleavage on pair of basic residues</keyword>
<keyword id="KW-1015">Disulfide bond</keyword>
<keyword id="KW-0372">Hormone</keyword>
<keyword id="KW-1185">Reference proteome</keyword>
<keyword id="KW-0964">Secreted</keyword>
<keyword id="KW-0732">Signal</keyword>
<feature type="signal peptide" evidence="4">
    <location>
        <begin position="1"/>
        <end position="22"/>
    </location>
</feature>
<feature type="propeptide" id="PRO_0000269882" evidence="1">
    <location>
        <begin position="23"/>
        <end position="33"/>
    </location>
</feature>
<feature type="peptide" id="PRO_0000004095" description="Islet amyloid polypeptide">
    <location>
        <begin position="37"/>
        <end position="72"/>
    </location>
</feature>
<feature type="propeptide" id="PRO_0000269883" evidence="1">
    <location>
        <begin position="78"/>
        <end position="91"/>
    </location>
</feature>
<feature type="modified residue" description="Tyrosine amide" evidence="1">
    <location>
        <position position="72"/>
    </location>
</feature>
<feature type="disulfide bond" evidence="3">
    <location>
        <begin position="37"/>
        <end position="42"/>
    </location>
</feature>
<feature type="sequence conflict" description="In Ref. 2; AAB05915." evidence="5" ref="2">
    <original>R</original>
    <variation>C</variation>
    <location>
        <position position="46"/>
    </location>
</feature>
<protein>
    <recommendedName>
        <fullName>Islet amyloid polypeptide</fullName>
        <shortName>IAPP</shortName>
    </recommendedName>
    <alternativeName>
        <fullName>Amylin</fullName>
    </alternativeName>
</protein>
<evidence type="ECO:0000250" key="1"/>
<evidence type="ECO:0000250" key="2">
    <source>
        <dbReference type="UniProtKB" id="P10997"/>
    </source>
</evidence>
<evidence type="ECO:0000250" key="3">
    <source>
        <dbReference type="UniProtKB" id="P12969"/>
    </source>
</evidence>
<evidence type="ECO:0000255" key="4"/>
<evidence type="ECO:0000305" key="5"/>
<dbReference type="EMBL" id="U62626">
    <property type="protein sequence ID" value="AAB05915.1"/>
    <property type="molecule type" value="Genomic_DNA"/>
</dbReference>
<dbReference type="RefSeq" id="NP_001181967.1">
    <property type="nucleotide sequence ID" value="NM_001195038.1"/>
</dbReference>
<dbReference type="SMR" id="Q28207"/>
<dbReference type="STRING" id="9913.ENSBTAP00000013921"/>
<dbReference type="PaxDb" id="9913-ENSBTAP00000013921"/>
<dbReference type="GeneID" id="100138011"/>
<dbReference type="KEGG" id="bta:100138011"/>
<dbReference type="CTD" id="3375"/>
<dbReference type="eggNOG" id="ENOG502S4AQ">
    <property type="taxonomic scope" value="Eukaryota"/>
</dbReference>
<dbReference type="HOGENOM" id="CLU_189304_0_0_1"/>
<dbReference type="InParanoid" id="Q28207"/>
<dbReference type="OrthoDB" id="5062115at2759"/>
<dbReference type="TreeFam" id="TF330783"/>
<dbReference type="Proteomes" id="UP000009136">
    <property type="component" value="Unplaced"/>
</dbReference>
<dbReference type="GO" id="GO:0005615">
    <property type="term" value="C:extracellular space"/>
    <property type="evidence" value="ECO:0000318"/>
    <property type="project" value="GO_Central"/>
</dbReference>
<dbReference type="GO" id="GO:0005179">
    <property type="term" value="F:hormone activity"/>
    <property type="evidence" value="ECO:0000250"/>
    <property type="project" value="UniProtKB"/>
</dbReference>
<dbReference type="GO" id="GO:0048018">
    <property type="term" value="F:receptor ligand activity"/>
    <property type="evidence" value="ECO:0000250"/>
    <property type="project" value="UniProtKB"/>
</dbReference>
<dbReference type="GO" id="GO:0097647">
    <property type="term" value="P:amylin receptor signaling pathway"/>
    <property type="evidence" value="ECO:0000250"/>
    <property type="project" value="UniProtKB"/>
</dbReference>
<dbReference type="Gene3D" id="6.10.250.2190">
    <property type="match status" value="1"/>
</dbReference>
<dbReference type="InterPro" id="IPR021117">
    <property type="entry name" value="Calcitonin-like"/>
</dbReference>
<dbReference type="InterPro" id="IPR021116">
    <property type="entry name" value="Calcitonin/adrenomedullin"/>
</dbReference>
<dbReference type="InterPro" id="IPR001693">
    <property type="entry name" value="Calcitonin_peptide-like"/>
</dbReference>
<dbReference type="InterPro" id="IPR000443">
    <property type="entry name" value="IAPP"/>
</dbReference>
<dbReference type="PANTHER" id="PTHR10505">
    <property type="entry name" value="CALCITONIN-RELATED"/>
    <property type="match status" value="1"/>
</dbReference>
<dbReference type="PANTHER" id="PTHR10505:SF4">
    <property type="entry name" value="ISLET AMYLOID POLYPEPTIDE"/>
    <property type="match status" value="1"/>
</dbReference>
<dbReference type="Pfam" id="PF00214">
    <property type="entry name" value="Calc_CGRP_IAPP"/>
    <property type="match status" value="1"/>
</dbReference>
<dbReference type="PRINTS" id="PR00818">
    <property type="entry name" value="ISLETAMYLOID"/>
</dbReference>
<dbReference type="SMART" id="SM00113">
    <property type="entry name" value="CALCITONIN"/>
    <property type="match status" value="1"/>
</dbReference>
<comment type="function">
    <text evidence="2 3">Amylin/IAPP is a glucoregulatory peptide hormone that plays an important role in the regulation of energy homeostasis (By similarity). Selectively inhibits insulin-stimulated glucose utilization and glycogen deposition in muscle, while not affecting adipocyte glucose metabolism. IAPP function is mediated by the CALCR-RAMPs (AMYRs) receptor complexes. Amylin can also bind CALCR receptor in the absence of RAMPs, although it is more selective for AMYRs (By similarity).</text>
</comment>
<comment type="subunit">
    <text evidence="2 3">Can form homodimers. Interacts with IDE and INS. Interaction with INS inhibits homodimerization and fibril formation (By similarity).</text>
</comment>
<comment type="subcellular location">
    <subcellularLocation>
        <location evidence="2">Secreted</location>
    </subcellularLocation>
</comment>
<comment type="domain">
    <text evidence="1">The mature protein is largely unstructured in the absence of a cognate ligand.</text>
</comment>
<comment type="similarity">
    <text evidence="5">Belongs to the calcitonin family.</text>
</comment>
<proteinExistence type="inferred from homology"/>
<name>IAPP_BOVIN</name>